<name>ARGB_SALDC</name>
<evidence type="ECO:0000255" key="1">
    <source>
        <dbReference type="HAMAP-Rule" id="MF_00082"/>
    </source>
</evidence>
<protein>
    <recommendedName>
        <fullName evidence="1">Acetylglutamate kinase</fullName>
        <ecNumber evidence="1">2.7.2.8</ecNumber>
    </recommendedName>
    <alternativeName>
        <fullName evidence="1">N-acetyl-L-glutamate 5-phosphotransferase</fullName>
    </alternativeName>
    <alternativeName>
        <fullName evidence="1">NAG kinase</fullName>
        <shortName evidence="1">NAGK</shortName>
    </alternativeName>
</protein>
<proteinExistence type="inferred from homology"/>
<accession>B5FPX4</accession>
<comment type="function">
    <text evidence="1">Catalyzes the ATP-dependent phosphorylation of N-acetyl-L-glutamate.</text>
</comment>
<comment type="catalytic activity">
    <reaction evidence="1">
        <text>N-acetyl-L-glutamate + ATP = N-acetyl-L-glutamyl 5-phosphate + ADP</text>
        <dbReference type="Rhea" id="RHEA:14629"/>
        <dbReference type="ChEBI" id="CHEBI:30616"/>
        <dbReference type="ChEBI" id="CHEBI:44337"/>
        <dbReference type="ChEBI" id="CHEBI:57936"/>
        <dbReference type="ChEBI" id="CHEBI:456216"/>
        <dbReference type="EC" id="2.7.2.8"/>
    </reaction>
</comment>
<comment type="pathway">
    <text evidence="1">Amino-acid biosynthesis; L-arginine biosynthesis; N(2)-acetyl-L-ornithine from L-glutamate: step 2/4.</text>
</comment>
<comment type="subunit">
    <text evidence="1">Homodimer.</text>
</comment>
<comment type="subcellular location">
    <subcellularLocation>
        <location evidence="1">Cytoplasm</location>
    </subcellularLocation>
</comment>
<comment type="similarity">
    <text evidence="1">Belongs to the acetylglutamate kinase family. ArgB subfamily.</text>
</comment>
<keyword id="KW-0028">Amino-acid biosynthesis</keyword>
<keyword id="KW-0055">Arginine biosynthesis</keyword>
<keyword id="KW-0067">ATP-binding</keyword>
<keyword id="KW-0963">Cytoplasm</keyword>
<keyword id="KW-0418">Kinase</keyword>
<keyword id="KW-0547">Nucleotide-binding</keyword>
<keyword id="KW-0808">Transferase</keyword>
<organism>
    <name type="scientific">Salmonella dublin (strain CT_02021853)</name>
    <dbReference type="NCBI Taxonomy" id="439851"/>
    <lineage>
        <taxon>Bacteria</taxon>
        <taxon>Pseudomonadati</taxon>
        <taxon>Pseudomonadota</taxon>
        <taxon>Gammaproteobacteria</taxon>
        <taxon>Enterobacterales</taxon>
        <taxon>Enterobacteriaceae</taxon>
        <taxon>Salmonella</taxon>
    </lineage>
</organism>
<gene>
    <name evidence="1" type="primary">argB</name>
    <name type="ordered locus">SeD_A4527</name>
</gene>
<dbReference type="EC" id="2.7.2.8" evidence="1"/>
<dbReference type="EMBL" id="CP001144">
    <property type="protein sequence ID" value="ACH73809.1"/>
    <property type="molecule type" value="Genomic_DNA"/>
</dbReference>
<dbReference type="SMR" id="B5FPX4"/>
<dbReference type="KEGG" id="sed:SeD_A4527"/>
<dbReference type="HOGENOM" id="CLU_053680_1_1_6"/>
<dbReference type="UniPathway" id="UPA00068">
    <property type="reaction ID" value="UER00107"/>
</dbReference>
<dbReference type="Proteomes" id="UP000008322">
    <property type="component" value="Chromosome"/>
</dbReference>
<dbReference type="GO" id="GO:0005737">
    <property type="term" value="C:cytoplasm"/>
    <property type="evidence" value="ECO:0007669"/>
    <property type="project" value="UniProtKB-SubCell"/>
</dbReference>
<dbReference type="GO" id="GO:0003991">
    <property type="term" value="F:acetylglutamate kinase activity"/>
    <property type="evidence" value="ECO:0007669"/>
    <property type="project" value="UniProtKB-UniRule"/>
</dbReference>
<dbReference type="GO" id="GO:0005524">
    <property type="term" value="F:ATP binding"/>
    <property type="evidence" value="ECO:0007669"/>
    <property type="project" value="UniProtKB-UniRule"/>
</dbReference>
<dbReference type="GO" id="GO:0042450">
    <property type="term" value="P:arginine biosynthetic process via ornithine"/>
    <property type="evidence" value="ECO:0007669"/>
    <property type="project" value="UniProtKB-UniRule"/>
</dbReference>
<dbReference type="GO" id="GO:0006526">
    <property type="term" value="P:L-arginine biosynthetic process"/>
    <property type="evidence" value="ECO:0007669"/>
    <property type="project" value="UniProtKB-UniPathway"/>
</dbReference>
<dbReference type="CDD" id="cd04249">
    <property type="entry name" value="AAK_NAGK-NC"/>
    <property type="match status" value="1"/>
</dbReference>
<dbReference type="FunFam" id="3.40.1160.10:FF:000008">
    <property type="entry name" value="Acetylglutamate kinase"/>
    <property type="match status" value="1"/>
</dbReference>
<dbReference type="Gene3D" id="3.40.1160.10">
    <property type="entry name" value="Acetylglutamate kinase-like"/>
    <property type="match status" value="1"/>
</dbReference>
<dbReference type="HAMAP" id="MF_00082">
    <property type="entry name" value="ArgB"/>
    <property type="match status" value="1"/>
</dbReference>
<dbReference type="InterPro" id="IPR036393">
    <property type="entry name" value="AceGlu_kinase-like_sf"/>
</dbReference>
<dbReference type="InterPro" id="IPR004662">
    <property type="entry name" value="AcgluKinase_fam"/>
</dbReference>
<dbReference type="InterPro" id="IPR037528">
    <property type="entry name" value="ArgB"/>
</dbReference>
<dbReference type="InterPro" id="IPR001048">
    <property type="entry name" value="Asp/Glu/Uridylate_kinase"/>
</dbReference>
<dbReference type="InterPro" id="IPR041731">
    <property type="entry name" value="NAGK-NC"/>
</dbReference>
<dbReference type="NCBIfam" id="TIGR00761">
    <property type="entry name" value="argB"/>
    <property type="match status" value="1"/>
</dbReference>
<dbReference type="PANTHER" id="PTHR23342">
    <property type="entry name" value="N-ACETYLGLUTAMATE SYNTHASE"/>
    <property type="match status" value="1"/>
</dbReference>
<dbReference type="PANTHER" id="PTHR23342:SF0">
    <property type="entry name" value="N-ACETYLGLUTAMATE SYNTHASE, MITOCHONDRIAL"/>
    <property type="match status" value="1"/>
</dbReference>
<dbReference type="Pfam" id="PF00696">
    <property type="entry name" value="AA_kinase"/>
    <property type="match status" value="1"/>
</dbReference>
<dbReference type="PIRSF" id="PIRSF000728">
    <property type="entry name" value="NAGK"/>
    <property type="match status" value="1"/>
</dbReference>
<dbReference type="SUPFAM" id="SSF53633">
    <property type="entry name" value="Carbamate kinase-like"/>
    <property type="match status" value="1"/>
</dbReference>
<feature type="chain" id="PRO_1000092879" description="Acetylglutamate kinase">
    <location>
        <begin position="1"/>
        <end position="257"/>
    </location>
</feature>
<feature type="binding site" evidence="1">
    <location>
        <begin position="43"/>
        <end position="44"/>
    </location>
    <ligand>
        <name>substrate</name>
    </ligand>
</feature>
<feature type="binding site" evidence="1">
    <location>
        <position position="65"/>
    </location>
    <ligand>
        <name>substrate</name>
    </ligand>
</feature>
<feature type="binding site" evidence="1">
    <location>
        <position position="157"/>
    </location>
    <ligand>
        <name>substrate</name>
    </ligand>
</feature>
<feature type="binding site" evidence="1">
    <location>
        <begin position="180"/>
        <end position="185"/>
    </location>
    <ligand>
        <name>ATP</name>
        <dbReference type="ChEBI" id="CHEBI:30616"/>
    </ligand>
</feature>
<feature type="binding site" evidence="1">
    <location>
        <begin position="208"/>
        <end position="210"/>
    </location>
    <ligand>
        <name>ATP</name>
        <dbReference type="ChEBI" id="CHEBI:30616"/>
    </ligand>
</feature>
<feature type="site" description="Transition state stabilizer" evidence="1">
    <location>
        <position position="7"/>
    </location>
</feature>
<feature type="site" description="Transition state stabilizer" evidence="1">
    <location>
        <position position="216"/>
    </location>
</feature>
<sequence length="257" mass="26876">MNPLIIKLGGVLLDSEEALERLFTALVNYRESHQRPLVIVHGGGCVVDELMKGLNLPVKKKDGLRVTPADQIGIITGALAGTANKTLLAWAKKHHIASVGLFLGDGDSVNVTQLDEALGHVGLAQPGSPKLINMLLENGFLPVVSSIGVTDDGQLMNVNADQAATALAATLGADLILLSDVSGILDGKGQRIAEMTASKAEQLIDQGIITDGMIVKVNAALDAARALGRPVDIASWRHAEQLPALFNGTPIGTRILA</sequence>
<reference key="1">
    <citation type="journal article" date="2011" name="J. Bacteriol.">
        <title>Comparative genomics of 28 Salmonella enterica isolates: evidence for CRISPR-mediated adaptive sublineage evolution.</title>
        <authorList>
            <person name="Fricke W.F."/>
            <person name="Mammel M.K."/>
            <person name="McDermott P.F."/>
            <person name="Tartera C."/>
            <person name="White D.G."/>
            <person name="Leclerc J.E."/>
            <person name="Ravel J."/>
            <person name="Cebula T.A."/>
        </authorList>
    </citation>
    <scope>NUCLEOTIDE SEQUENCE [LARGE SCALE GENOMIC DNA]</scope>
    <source>
        <strain>CT_02021853</strain>
    </source>
</reference>